<comment type="function">
    <text evidence="1">RuBisCO catalyzes two reactions: the carboxylation of D-ribulose 1,5-bisphosphate, the primary event in carbon dioxide fixation, as well as the oxidative fragmentation of the pentose substrate in the photorespiration process. Both reactions occur simultaneously and in competition at the same active site.</text>
</comment>
<comment type="catalytic activity">
    <reaction evidence="1">
        <text>2 (2R)-3-phosphoglycerate + 2 H(+) = D-ribulose 1,5-bisphosphate + CO2 + H2O</text>
        <dbReference type="Rhea" id="RHEA:23124"/>
        <dbReference type="ChEBI" id="CHEBI:15377"/>
        <dbReference type="ChEBI" id="CHEBI:15378"/>
        <dbReference type="ChEBI" id="CHEBI:16526"/>
        <dbReference type="ChEBI" id="CHEBI:57870"/>
        <dbReference type="ChEBI" id="CHEBI:58272"/>
        <dbReference type="EC" id="4.1.1.39"/>
    </reaction>
</comment>
<comment type="catalytic activity">
    <reaction evidence="1">
        <text>D-ribulose 1,5-bisphosphate + O2 = 2-phosphoglycolate + (2R)-3-phosphoglycerate + 2 H(+)</text>
        <dbReference type="Rhea" id="RHEA:36631"/>
        <dbReference type="ChEBI" id="CHEBI:15378"/>
        <dbReference type="ChEBI" id="CHEBI:15379"/>
        <dbReference type="ChEBI" id="CHEBI:57870"/>
        <dbReference type="ChEBI" id="CHEBI:58033"/>
        <dbReference type="ChEBI" id="CHEBI:58272"/>
    </reaction>
</comment>
<comment type="cofactor">
    <cofactor evidence="1">
        <name>Mg(2+)</name>
        <dbReference type="ChEBI" id="CHEBI:18420"/>
    </cofactor>
    <text evidence="1">Binds 1 Mg(2+) ion per subunit.</text>
</comment>
<comment type="subunit">
    <text evidence="1">Heterohexadecamer of 8 large chains and 8 small chains; disulfide-linked. The disulfide link is formed within the large subunit homodimers.</text>
</comment>
<comment type="subcellular location">
    <subcellularLocation>
        <location>Plastid</location>
        <location>Chloroplast</location>
    </subcellularLocation>
</comment>
<comment type="PTM">
    <text evidence="1">The disulfide bond which can form in the large chain dimeric partners within the hexadecamer appears to be associated with oxidative stress and protein turnover.</text>
</comment>
<comment type="miscellaneous">
    <text evidence="1">The basic functional RuBisCO is composed of a large chain homodimer in a 'head-to-tail' conformation. In form I RuBisCO this homodimer is arranged in a barrel-like tetramer with the small subunits forming a tetrameric 'cap' on each end of the 'barrel'.</text>
</comment>
<comment type="similarity">
    <text evidence="1">Belongs to the RuBisCO large chain family. Type I subfamily.</text>
</comment>
<proteinExistence type="inferred from homology"/>
<dbReference type="EC" id="4.1.1.39" evidence="1"/>
<dbReference type="EMBL" id="Z70170">
    <property type="protein sequence ID" value="CAA94028.1"/>
    <property type="molecule type" value="Genomic_DNA"/>
</dbReference>
<dbReference type="SMR" id="Q33438"/>
<dbReference type="GO" id="GO:0009507">
    <property type="term" value="C:chloroplast"/>
    <property type="evidence" value="ECO:0007669"/>
    <property type="project" value="UniProtKB-SubCell"/>
</dbReference>
<dbReference type="GO" id="GO:0000287">
    <property type="term" value="F:magnesium ion binding"/>
    <property type="evidence" value="ECO:0007669"/>
    <property type="project" value="InterPro"/>
</dbReference>
<dbReference type="GO" id="GO:0004497">
    <property type="term" value="F:monooxygenase activity"/>
    <property type="evidence" value="ECO:0007669"/>
    <property type="project" value="UniProtKB-KW"/>
</dbReference>
<dbReference type="GO" id="GO:0016984">
    <property type="term" value="F:ribulose-bisphosphate carboxylase activity"/>
    <property type="evidence" value="ECO:0007669"/>
    <property type="project" value="UniProtKB-EC"/>
</dbReference>
<dbReference type="GO" id="GO:0009853">
    <property type="term" value="P:photorespiration"/>
    <property type="evidence" value="ECO:0007669"/>
    <property type="project" value="UniProtKB-KW"/>
</dbReference>
<dbReference type="GO" id="GO:0019253">
    <property type="term" value="P:reductive pentose-phosphate cycle"/>
    <property type="evidence" value="ECO:0007669"/>
    <property type="project" value="UniProtKB-KW"/>
</dbReference>
<dbReference type="CDD" id="cd08212">
    <property type="entry name" value="RuBisCO_large_I"/>
    <property type="match status" value="1"/>
</dbReference>
<dbReference type="FunFam" id="3.20.20.110:FF:000001">
    <property type="entry name" value="Ribulose bisphosphate carboxylase large chain"/>
    <property type="match status" value="1"/>
</dbReference>
<dbReference type="FunFam" id="3.30.70.150:FF:000001">
    <property type="entry name" value="Ribulose bisphosphate carboxylase large chain"/>
    <property type="match status" value="1"/>
</dbReference>
<dbReference type="Gene3D" id="3.20.20.110">
    <property type="entry name" value="Ribulose bisphosphate carboxylase, large subunit, C-terminal domain"/>
    <property type="match status" value="1"/>
</dbReference>
<dbReference type="Gene3D" id="3.30.70.150">
    <property type="entry name" value="RuBisCO large subunit, N-terminal domain"/>
    <property type="match status" value="1"/>
</dbReference>
<dbReference type="HAMAP" id="MF_01338">
    <property type="entry name" value="RuBisCO_L_type1"/>
    <property type="match status" value="1"/>
</dbReference>
<dbReference type="InterPro" id="IPR033966">
    <property type="entry name" value="RuBisCO"/>
</dbReference>
<dbReference type="InterPro" id="IPR020878">
    <property type="entry name" value="RuBisCo_large_chain_AS"/>
</dbReference>
<dbReference type="InterPro" id="IPR000685">
    <property type="entry name" value="RuBisCO_lsu_C"/>
</dbReference>
<dbReference type="InterPro" id="IPR036376">
    <property type="entry name" value="RuBisCO_lsu_C_sf"/>
</dbReference>
<dbReference type="InterPro" id="IPR017443">
    <property type="entry name" value="RuBisCO_lsu_fd_N"/>
</dbReference>
<dbReference type="InterPro" id="IPR036422">
    <property type="entry name" value="RuBisCO_lsu_N_sf"/>
</dbReference>
<dbReference type="InterPro" id="IPR020888">
    <property type="entry name" value="RuBisCO_lsuI"/>
</dbReference>
<dbReference type="NCBIfam" id="NF003252">
    <property type="entry name" value="PRK04208.1"/>
    <property type="match status" value="1"/>
</dbReference>
<dbReference type="PANTHER" id="PTHR42704">
    <property type="entry name" value="RIBULOSE BISPHOSPHATE CARBOXYLASE"/>
    <property type="match status" value="1"/>
</dbReference>
<dbReference type="PANTHER" id="PTHR42704:SF15">
    <property type="entry name" value="RIBULOSE BISPHOSPHATE CARBOXYLASE LARGE CHAIN"/>
    <property type="match status" value="1"/>
</dbReference>
<dbReference type="Pfam" id="PF00016">
    <property type="entry name" value="RuBisCO_large"/>
    <property type="match status" value="1"/>
</dbReference>
<dbReference type="Pfam" id="PF02788">
    <property type="entry name" value="RuBisCO_large_N"/>
    <property type="match status" value="1"/>
</dbReference>
<dbReference type="SFLD" id="SFLDG01052">
    <property type="entry name" value="RuBisCO"/>
    <property type="match status" value="1"/>
</dbReference>
<dbReference type="SFLD" id="SFLDS00014">
    <property type="entry name" value="RuBisCO"/>
    <property type="match status" value="1"/>
</dbReference>
<dbReference type="SFLD" id="SFLDG00301">
    <property type="entry name" value="RuBisCO-like_proteins"/>
    <property type="match status" value="1"/>
</dbReference>
<dbReference type="SUPFAM" id="SSF51649">
    <property type="entry name" value="RuBisCo, C-terminal domain"/>
    <property type="match status" value="1"/>
</dbReference>
<dbReference type="SUPFAM" id="SSF54966">
    <property type="entry name" value="RuBisCO, large subunit, small (N-terminal) domain"/>
    <property type="match status" value="1"/>
</dbReference>
<dbReference type="PROSITE" id="PS00157">
    <property type="entry name" value="RUBISCO_LARGE"/>
    <property type="match status" value="1"/>
</dbReference>
<gene>
    <name evidence="1" type="primary">rbcL</name>
</gene>
<keyword id="KW-0113">Calvin cycle</keyword>
<keyword id="KW-0120">Carbon dioxide fixation</keyword>
<keyword id="KW-0150">Chloroplast</keyword>
<keyword id="KW-1015">Disulfide bond</keyword>
<keyword id="KW-0456">Lyase</keyword>
<keyword id="KW-0460">Magnesium</keyword>
<keyword id="KW-0479">Metal-binding</keyword>
<keyword id="KW-0488">Methylation</keyword>
<keyword id="KW-0503">Monooxygenase</keyword>
<keyword id="KW-0560">Oxidoreductase</keyword>
<keyword id="KW-0601">Photorespiration</keyword>
<keyword id="KW-0602">Photosynthesis</keyword>
<keyword id="KW-0934">Plastid</keyword>
<protein>
    <recommendedName>
        <fullName evidence="1">Ribulose bisphosphate carboxylase large chain</fullName>
        <shortName evidence="1">RuBisCO large subunit</shortName>
        <ecNumber evidence="1">4.1.1.39</ecNumber>
    </recommendedName>
</protein>
<evidence type="ECO:0000255" key="1">
    <source>
        <dbReference type="HAMAP-Rule" id="MF_01338"/>
    </source>
</evidence>
<reference key="1">
    <citation type="journal article" date="1995" name="Bot. Acta">
        <title>Molecular phylogeny of the Papilionoideae (family Leguminosae): rbcL sequences versus chemical taxonomy.</title>
        <authorList>
            <person name="Kaess E."/>
            <person name="Wink M."/>
        </authorList>
    </citation>
    <scope>NUCLEOTIDE SEQUENCE [GENOMIC DNA]</scope>
    <source>
        <tissue>Leaf</tissue>
    </source>
</reference>
<accession>Q33438</accession>
<organism>
    <name type="scientific">Erythrina crista-galli</name>
    <name type="common">Cockspur coral tree</name>
    <name type="synonym">Micropteryx crista-galli</name>
    <dbReference type="NCBI Taxonomy" id="49817"/>
    <lineage>
        <taxon>Eukaryota</taxon>
        <taxon>Viridiplantae</taxon>
        <taxon>Streptophyta</taxon>
        <taxon>Embryophyta</taxon>
        <taxon>Tracheophyta</taxon>
        <taxon>Spermatophyta</taxon>
        <taxon>Magnoliopsida</taxon>
        <taxon>eudicotyledons</taxon>
        <taxon>Gunneridae</taxon>
        <taxon>Pentapetalae</taxon>
        <taxon>rosids</taxon>
        <taxon>fabids</taxon>
        <taxon>Fabales</taxon>
        <taxon>Fabaceae</taxon>
        <taxon>Papilionoideae</taxon>
        <taxon>50 kb inversion clade</taxon>
        <taxon>NPAAA clade</taxon>
        <taxon>indigoferoid/millettioid clade</taxon>
        <taxon>Phaseoleae</taxon>
        <taxon>Erythrina</taxon>
    </lineage>
</organism>
<name>RBL_ERYCG</name>
<sequence>SVGFKAGVKDYKLTYYTPEYETKDTDILAAFRVTPQPGVPPEEAGAAVAAESSTGTWTTVWTDGLTSLDRYKGRCYHIEPVAGEENQYIAYVAYPLDLFEEGSVTNMFTSIVGNVFGFKALRALRLEDFRIPTAYVKTFQGPPHGIQVERDKLNKYGRPLLGCTIKPKLGLSAKNYGRAVYECLRGGLDFTKDDENVNSQPFMRWRDRFLFCAEALYKAQAETGEIKGHYLNATAGTCEEMIKRAVFARELGVPIIMHDYLTGGFTANTSLAHYCRDNGLLLHIHRAMHAVIDRQKNHGMHFRVLAKALRLSGGDHVHSGTVVGKLEGEREITLGFVDLIRDDLIEKDRSRGIYFTQDWVSLPGVLPVASGGIHVWHMPALTEIFGDDSVLQFGGGTLGHPWGNAPGAVANRVALEACVQARNEGRDLAREGNEIIREASKWSPELAAACEVWKE</sequence>
<geneLocation type="chloroplast"/>
<feature type="chain" id="PRO_0000062462" description="Ribulose bisphosphate carboxylase large chain">
    <location>
        <begin position="1" status="less than"/>
        <end position="455" status="greater than"/>
    </location>
</feature>
<feature type="active site" description="Proton acceptor" evidence="1">
    <location>
        <position position="166"/>
    </location>
</feature>
<feature type="active site" description="Proton acceptor" evidence="1">
    <location>
        <position position="285"/>
    </location>
</feature>
<feature type="binding site" description="in homodimeric partner" evidence="1">
    <location>
        <position position="114"/>
    </location>
    <ligand>
        <name>substrate</name>
    </ligand>
</feature>
<feature type="binding site" evidence="1">
    <location>
        <position position="164"/>
    </location>
    <ligand>
        <name>substrate</name>
    </ligand>
</feature>
<feature type="binding site" evidence="1">
    <location>
        <position position="168"/>
    </location>
    <ligand>
        <name>substrate</name>
    </ligand>
</feature>
<feature type="binding site" description="via carbamate group" evidence="1">
    <location>
        <position position="192"/>
    </location>
    <ligand>
        <name>Mg(2+)</name>
        <dbReference type="ChEBI" id="CHEBI:18420"/>
    </ligand>
</feature>
<feature type="binding site" evidence="1">
    <location>
        <position position="194"/>
    </location>
    <ligand>
        <name>Mg(2+)</name>
        <dbReference type="ChEBI" id="CHEBI:18420"/>
    </ligand>
</feature>
<feature type="binding site" evidence="1">
    <location>
        <position position="195"/>
    </location>
    <ligand>
        <name>Mg(2+)</name>
        <dbReference type="ChEBI" id="CHEBI:18420"/>
    </ligand>
</feature>
<feature type="binding site" evidence="1">
    <location>
        <position position="286"/>
    </location>
    <ligand>
        <name>substrate</name>
    </ligand>
</feature>
<feature type="binding site" evidence="1">
    <location>
        <position position="318"/>
    </location>
    <ligand>
        <name>substrate</name>
    </ligand>
</feature>
<feature type="binding site" evidence="1">
    <location>
        <position position="370"/>
    </location>
    <ligand>
        <name>substrate</name>
    </ligand>
</feature>
<feature type="site" description="Transition state stabilizer" evidence="1">
    <location>
        <position position="325"/>
    </location>
</feature>
<feature type="modified residue" description="N6,N6,N6-trimethyllysine" evidence="1">
    <location>
        <position position="5"/>
    </location>
</feature>
<feature type="modified residue" description="N6-carboxylysine" evidence="1">
    <location>
        <position position="192"/>
    </location>
</feature>
<feature type="disulfide bond" description="Interchain; in linked form" evidence="1">
    <location>
        <position position="238"/>
    </location>
</feature>
<feature type="non-terminal residue">
    <location>
        <position position="1"/>
    </location>
</feature>
<feature type="non-terminal residue">
    <location>
        <position position="455"/>
    </location>
</feature>